<comment type="function">
    <text evidence="3">Has antibacterial activity against the Gram-positive bacterium S.aureus 1056 MRSA (MIC=2.78 ug/ml) and the Gram-negative bacterium E.coli O157:H7 (MIC=2.41 ug/ml). Does not have antifungal activity against the yeast C.albicans 3153A.</text>
</comment>
<comment type="subcellular location">
    <subcellularLocation>
        <location>Secreted</location>
    </subcellularLocation>
</comment>
<comment type="mass spectrometry"/>
<comment type="similarity">
    <text evidence="2">Belongs to the beta-defensin family.</text>
</comment>
<dbReference type="SMR" id="P85115"/>
<dbReference type="GO" id="GO:0005576">
    <property type="term" value="C:extracellular region"/>
    <property type="evidence" value="ECO:0007669"/>
    <property type="project" value="UniProtKB-SubCell"/>
</dbReference>
<dbReference type="GO" id="GO:0042742">
    <property type="term" value="P:defense response to bacterium"/>
    <property type="evidence" value="ECO:0007669"/>
    <property type="project" value="UniProtKB-KW"/>
</dbReference>
<dbReference type="InterPro" id="IPR001855">
    <property type="entry name" value="Defensin_beta-like"/>
</dbReference>
<dbReference type="Pfam" id="PF00711">
    <property type="entry name" value="Defensin_beta"/>
    <property type="match status" value="1"/>
</dbReference>
<dbReference type="SUPFAM" id="SSF57392">
    <property type="entry name" value="Defensin-like"/>
    <property type="match status" value="1"/>
</dbReference>
<reference evidence="5" key="1">
    <citation type="journal article" date="2006" name="Int. J. Antimicrob. Agents">
        <title>Identification of three novel ostricacins: an update on the phylogenetic perspective of beta-defensins.</title>
        <authorList>
            <person name="Sugiarto H."/>
            <person name="Yu P.-L."/>
        </authorList>
    </citation>
    <scope>PROTEIN SEQUENCE</scope>
    <scope>FUNCTION</scope>
    <scope>MASS SPECTROMETRY</scope>
    <source>
        <tissue evidence="3">Blood</tissue>
    </source>
</reference>
<sequence>IPRPLDPCIAQNGRCFTGICRYPYFWIGTCRNGKSCCRRR</sequence>
<proteinExistence type="evidence at protein level"/>
<feature type="peptide" id="PRO_0000284752" description="Ostricacin-3" evidence="3">
    <location>
        <begin position="1"/>
        <end position="40" status="greater than"/>
    </location>
</feature>
<feature type="disulfide bond" evidence="1">
    <location>
        <begin position="8"/>
        <end position="36"/>
    </location>
</feature>
<feature type="disulfide bond" evidence="1">
    <location>
        <begin position="15"/>
        <end position="30"/>
    </location>
</feature>
<feature type="disulfide bond" evidence="1">
    <location>
        <begin position="20"/>
        <end position="37"/>
    </location>
</feature>
<feature type="non-terminal residue" evidence="4">
    <location>
        <position position="40"/>
    </location>
</feature>
<evidence type="ECO:0000250" key="1">
    <source>
        <dbReference type="UniProtKB" id="P83430"/>
    </source>
</evidence>
<evidence type="ECO:0000255" key="2"/>
<evidence type="ECO:0000269" key="3">
    <source>
    </source>
</evidence>
<evidence type="ECO:0000303" key="4">
    <source>
    </source>
</evidence>
<evidence type="ECO:0000305" key="5"/>
<name>OSTR3_STRCA</name>
<organism>
    <name type="scientific">Struthio camelus</name>
    <name type="common">Common ostrich</name>
    <dbReference type="NCBI Taxonomy" id="8801"/>
    <lineage>
        <taxon>Eukaryota</taxon>
        <taxon>Metazoa</taxon>
        <taxon>Chordata</taxon>
        <taxon>Craniata</taxon>
        <taxon>Vertebrata</taxon>
        <taxon>Euteleostomi</taxon>
        <taxon>Archelosauria</taxon>
        <taxon>Archosauria</taxon>
        <taxon>Dinosauria</taxon>
        <taxon>Saurischia</taxon>
        <taxon>Theropoda</taxon>
        <taxon>Coelurosauria</taxon>
        <taxon>Aves</taxon>
        <taxon>Palaeognathae</taxon>
        <taxon>Struthioniformes</taxon>
        <taxon>Struthionidae</taxon>
        <taxon>Struthio</taxon>
    </lineage>
</organism>
<protein>
    <recommendedName>
        <fullName>Ostricacin-3</fullName>
    </recommendedName>
    <alternativeName>
        <fullName>Beta-defensin 7</fullName>
    </alternativeName>
</protein>
<accession>P85115</accession>
<keyword id="KW-0044">Antibiotic</keyword>
<keyword id="KW-0929">Antimicrobial</keyword>
<keyword id="KW-0211">Defensin</keyword>
<keyword id="KW-0903">Direct protein sequencing</keyword>
<keyword id="KW-1015">Disulfide bond</keyword>
<keyword id="KW-0964">Secreted</keyword>